<evidence type="ECO:0000255" key="1">
    <source>
        <dbReference type="HAMAP-Rule" id="MF_00767"/>
    </source>
</evidence>
<reference key="1">
    <citation type="submission" date="2005-10" db="EMBL/GenBank/DDBJ databases">
        <title>Complete sequence of chromosome 1 of Burkholderia sp. 383.</title>
        <authorList>
            <consortium name="US DOE Joint Genome Institute"/>
            <person name="Copeland A."/>
            <person name="Lucas S."/>
            <person name="Lapidus A."/>
            <person name="Barry K."/>
            <person name="Detter J.C."/>
            <person name="Glavina T."/>
            <person name="Hammon N."/>
            <person name="Israni S."/>
            <person name="Pitluck S."/>
            <person name="Chain P."/>
            <person name="Malfatti S."/>
            <person name="Shin M."/>
            <person name="Vergez L."/>
            <person name="Schmutz J."/>
            <person name="Larimer F."/>
            <person name="Land M."/>
            <person name="Kyrpides N."/>
            <person name="Lykidis A."/>
            <person name="Richardson P."/>
        </authorList>
    </citation>
    <scope>NUCLEOTIDE SEQUENCE [LARGE SCALE GENOMIC DNA]</scope>
    <source>
        <strain>ATCC 17760 / DSM 23089 / LMG 22485 / NCIMB 9086 / R18194 / 383</strain>
    </source>
</reference>
<accession>Q39I23</accession>
<gene>
    <name evidence="1" type="primary">astE</name>
    <name type="ordered locus">Bcep18194_A4296</name>
</gene>
<protein>
    <recommendedName>
        <fullName evidence="1">Succinylglutamate desuccinylase</fullName>
        <ecNumber evidence="1">3.5.1.96</ecNumber>
    </recommendedName>
</protein>
<proteinExistence type="inferred from homology"/>
<sequence>MTSSVDSRMADALLDDFLAFTLTGSAPSATDGACAAGAVRWQWLGDGLLALEPAAAEAADTARASVLVSAGVHGDETAPIELLSMLVRDLASGALPLACRLLVVLGNVPAMRAGERYLDDDLNRLFSGRHAQVPDSREAPRATQLEAAAAAFFAAAPAGAARWHIDMHTAIRASVFEQFALLPHTGMPPTRTMFEWLGDAQIAAVLLHTAKGNTYSHFTAEHCGALACTLELGKVRPFGQNDLTRFAPADRAVRKLVSGATGEADVPLPRVFTVIDQITKQSDALELFVAADVANFTAFARGTVLAQDGDYRYTVTHDEERIVFPNPSVKPGLRAGLLVIDTTRETVAALV</sequence>
<dbReference type="EC" id="3.5.1.96" evidence="1"/>
<dbReference type="EMBL" id="CP000151">
    <property type="protein sequence ID" value="ABB07893.1"/>
    <property type="molecule type" value="Genomic_DNA"/>
</dbReference>
<dbReference type="RefSeq" id="WP_011351464.1">
    <property type="nucleotide sequence ID" value="NC_007510.1"/>
</dbReference>
<dbReference type="SMR" id="Q39I23"/>
<dbReference type="GeneID" id="45094201"/>
<dbReference type="KEGG" id="bur:Bcep18194_A4296"/>
<dbReference type="PATRIC" id="fig|482957.22.peg.1189"/>
<dbReference type="HOGENOM" id="CLU_071608_0_0_4"/>
<dbReference type="UniPathway" id="UPA00185">
    <property type="reaction ID" value="UER00283"/>
</dbReference>
<dbReference type="Proteomes" id="UP000002705">
    <property type="component" value="Chromosome 1"/>
</dbReference>
<dbReference type="GO" id="GO:0016788">
    <property type="term" value="F:hydrolase activity, acting on ester bonds"/>
    <property type="evidence" value="ECO:0007669"/>
    <property type="project" value="UniProtKB-UniRule"/>
</dbReference>
<dbReference type="GO" id="GO:0009017">
    <property type="term" value="F:succinylglutamate desuccinylase activity"/>
    <property type="evidence" value="ECO:0007669"/>
    <property type="project" value="UniProtKB-EC"/>
</dbReference>
<dbReference type="GO" id="GO:0008270">
    <property type="term" value="F:zinc ion binding"/>
    <property type="evidence" value="ECO:0007669"/>
    <property type="project" value="UniProtKB-UniRule"/>
</dbReference>
<dbReference type="GO" id="GO:0019544">
    <property type="term" value="P:arginine catabolic process to glutamate"/>
    <property type="evidence" value="ECO:0007669"/>
    <property type="project" value="UniProtKB-UniRule"/>
</dbReference>
<dbReference type="GO" id="GO:0019545">
    <property type="term" value="P:arginine catabolic process to succinate"/>
    <property type="evidence" value="ECO:0007669"/>
    <property type="project" value="UniProtKB-UniRule"/>
</dbReference>
<dbReference type="CDD" id="cd03855">
    <property type="entry name" value="M14_ASTE"/>
    <property type="match status" value="1"/>
</dbReference>
<dbReference type="Gene3D" id="3.40.630.10">
    <property type="entry name" value="Zn peptidases"/>
    <property type="match status" value="1"/>
</dbReference>
<dbReference type="HAMAP" id="MF_00767">
    <property type="entry name" value="Arg_catab_AstE"/>
    <property type="match status" value="1"/>
</dbReference>
<dbReference type="InterPro" id="IPR050178">
    <property type="entry name" value="AspA/AstE_fam"/>
</dbReference>
<dbReference type="InterPro" id="IPR055438">
    <property type="entry name" value="AstE_AspA_cat"/>
</dbReference>
<dbReference type="InterPro" id="IPR007036">
    <property type="entry name" value="Aste_AspA_hybrid_dom"/>
</dbReference>
<dbReference type="InterPro" id="IPR016681">
    <property type="entry name" value="SuccinylGlu_desuccinylase"/>
</dbReference>
<dbReference type="NCBIfam" id="TIGR03242">
    <property type="entry name" value="arg_catab_astE"/>
    <property type="match status" value="1"/>
</dbReference>
<dbReference type="NCBIfam" id="NF003706">
    <property type="entry name" value="PRK05324.1"/>
    <property type="match status" value="1"/>
</dbReference>
<dbReference type="PANTHER" id="PTHR15162">
    <property type="entry name" value="ASPARTOACYLASE"/>
    <property type="match status" value="1"/>
</dbReference>
<dbReference type="PANTHER" id="PTHR15162:SF7">
    <property type="entry name" value="SUCCINYLGLUTAMATE DESUCCINYLASE"/>
    <property type="match status" value="1"/>
</dbReference>
<dbReference type="Pfam" id="PF24827">
    <property type="entry name" value="AstE_AspA_cat"/>
    <property type="match status" value="1"/>
</dbReference>
<dbReference type="Pfam" id="PF04952">
    <property type="entry name" value="AstE_AspA_hybrid"/>
    <property type="match status" value="1"/>
</dbReference>
<dbReference type="PIRSF" id="PIRSF017020">
    <property type="entry name" value="AstE"/>
    <property type="match status" value="1"/>
</dbReference>
<dbReference type="SUPFAM" id="SSF53187">
    <property type="entry name" value="Zn-dependent exopeptidases"/>
    <property type="match status" value="1"/>
</dbReference>
<feature type="chain" id="PRO_0000257708" description="Succinylglutamate desuccinylase">
    <location>
        <begin position="1"/>
        <end position="351"/>
    </location>
</feature>
<feature type="active site" evidence="1">
    <location>
        <position position="231"/>
    </location>
</feature>
<feature type="binding site" evidence="1">
    <location>
        <position position="73"/>
    </location>
    <ligand>
        <name>Zn(2+)</name>
        <dbReference type="ChEBI" id="CHEBI:29105"/>
    </ligand>
</feature>
<feature type="binding site" evidence="1">
    <location>
        <position position="76"/>
    </location>
    <ligand>
        <name>Zn(2+)</name>
        <dbReference type="ChEBI" id="CHEBI:29105"/>
    </ligand>
</feature>
<feature type="binding site" evidence="1">
    <location>
        <position position="168"/>
    </location>
    <ligand>
        <name>Zn(2+)</name>
        <dbReference type="ChEBI" id="CHEBI:29105"/>
    </ligand>
</feature>
<keyword id="KW-0056">Arginine metabolism</keyword>
<keyword id="KW-0378">Hydrolase</keyword>
<keyword id="KW-0479">Metal-binding</keyword>
<keyword id="KW-0862">Zinc</keyword>
<name>ASTE_BURL3</name>
<comment type="function">
    <text evidence="1">Transforms N(2)-succinylglutamate into succinate and glutamate.</text>
</comment>
<comment type="catalytic activity">
    <reaction evidence="1">
        <text>N-succinyl-L-glutamate + H2O = L-glutamate + succinate</text>
        <dbReference type="Rhea" id="RHEA:15169"/>
        <dbReference type="ChEBI" id="CHEBI:15377"/>
        <dbReference type="ChEBI" id="CHEBI:29985"/>
        <dbReference type="ChEBI" id="CHEBI:30031"/>
        <dbReference type="ChEBI" id="CHEBI:58763"/>
        <dbReference type="EC" id="3.5.1.96"/>
    </reaction>
</comment>
<comment type="cofactor">
    <cofactor evidence="1">
        <name>Zn(2+)</name>
        <dbReference type="ChEBI" id="CHEBI:29105"/>
    </cofactor>
    <text evidence="1">Binds 1 zinc ion per subunit.</text>
</comment>
<comment type="pathway">
    <text evidence="1">Amino-acid degradation; L-arginine degradation via AST pathway; L-glutamate and succinate from L-arginine: step 5/5.</text>
</comment>
<comment type="similarity">
    <text evidence="1">Belongs to the AspA/AstE family. Succinylglutamate desuccinylase subfamily.</text>
</comment>
<organism>
    <name type="scientific">Burkholderia lata (strain ATCC 17760 / DSM 23089 / LMG 22485 / NCIMB 9086 / R18194 / 383)</name>
    <dbReference type="NCBI Taxonomy" id="482957"/>
    <lineage>
        <taxon>Bacteria</taxon>
        <taxon>Pseudomonadati</taxon>
        <taxon>Pseudomonadota</taxon>
        <taxon>Betaproteobacteria</taxon>
        <taxon>Burkholderiales</taxon>
        <taxon>Burkholderiaceae</taxon>
        <taxon>Burkholderia</taxon>
        <taxon>Burkholderia cepacia complex</taxon>
    </lineage>
</organism>